<organism>
    <name type="scientific">Influenza A virus (strain A/Chicken/Hong Kong/31.2/2002 H5N1 genotype X1)</name>
    <dbReference type="NCBI Taxonomy" id="284169"/>
    <lineage>
        <taxon>Viruses</taxon>
        <taxon>Riboviria</taxon>
        <taxon>Orthornavirae</taxon>
        <taxon>Negarnaviricota</taxon>
        <taxon>Polyploviricotina</taxon>
        <taxon>Insthoviricetes</taxon>
        <taxon>Articulavirales</taxon>
        <taxon>Orthomyxoviridae</taxon>
        <taxon>Alphainfluenzavirus</taxon>
        <taxon>Alphainfluenzavirus influenzae</taxon>
        <taxon>Influenza A virus</taxon>
    </lineage>
</organism>
<evidence type="ECO:0000255" key="1">
    <source>
        <dbReference type="HAMAP-Rule" id="MF_04070"/>
    </source>
</evidence>
<evidence type="ECO:0000256" key="2">
    <source>
        <dbReference type="SAM" id="MobiDB-lite"/>
    </source>
</evidence>
<comment type="function">
    <text evidence="1">Encapsidates the negative strand viral RNA, protecting it from nucleases. The encapsidated genomic RNA is termed the ribonucleoprotein (RNP) and serves as template for transcription and replication. The RNP needs to be localized in the host nucleus to start an infectious cycle, but is too large to diffuse through the nuclear pore complex. NP comprises at least 2 nuclear localization signals that are responsible for the active RNP import into the nucleus through cellular importin alpha/beta pathway. Later in the infection, nclear export of RNPs are mediated through viral proteins NEP interacting with M1 which binds nucleoproteins. It is possible that nucleoprotein binds directly host exportin-1/XPO1 and plays an active role in RNPs nuclear export. M1 interaction with RNP seems to hide nucleoprotein's nuclear localization signals. Soon after a virion infects a new cell, M1 dissociates from the RNP under acidification of the virion driven by M2 protein. Dissociation of M1 from RNP unmasks nucleoprotein's nuclear localization signals, targeting the RNP to the nucleus.</text>
</comment>
<comment type="subunit">
    <text evidence="1">Homomultimerizes to form the nucleocapsid. May bind host exportin-1/XPO1. Binds to viral genomic RNA. Protein-RNA contacts are mediated by a combination of electrostatic interactions between positively charged residues and the phosphate backbone and planar interactions between aromatic side chains and bases.</text>
</comment>
<comment type="subcellular location">
    <subcellularLocation>
        <location evidence="1">Virion</location>
    </subcellularLocation>
    <subcellularLocation>
        <location evidence="1">Host nucleus</location>
    </subcellularLocation>
</comment>
<comment type="PTM">
    <text evidence="1">Late in virus-infected cells, may be cleaved from a 56-kDa protein to a 53-kDa protein by a cellular caspase. This cleavage might be a marker for the onset of apoptosis in infected cells or have a specific function in virus host interaction.</text>
</comment>
<comment type="similarity">
    <text evidence="1">Belongs to the influenza viruses nucleoprotein family.</text>
</comment>
<gene>
    <name evidence="1" type="primary">NP</name>
</gene>
<keyword id="KW-0167">Capsid protein</keyword>
<keyword id="KW-1139">Helical capsid protein</keyword>
<keyword id="KW-1048">Host nucleus</keyword>
<keyword id="KW-0945">Host-virus interaction</keyword>
<keyword id="KW-0687">Ribonucleoprotein</keyword>
<keyword id="KW-0694">RNA-binding</keyword>
<keyword id="KW-0543">Viral nucleoprotein</keyword>
<keyword id="KW-1163">Viral penetration into host nucleus</keyword>
<keyword id="KW-0946">Virion</keyword>
<keyword id="KW-1160">Virus entry into host cell</keyword>
<sequence length="498" mass="56348">MASQGTKRSYEQMETGGERQNATEIRASVGRMVSGIGRFYIQMCTELKLSDYEGRLIQNSITIERMVLSAFDERRNRYLEEHPSAGKDPKKTGGPIYRRRDGKWVRELILYDKEEIRRIWRQANNGEDATAGLTHLMIWHSNLNDATYQRTRALVRTGMDPRMCSLMQGSTLPRRSGAAGAAIKGVGTMVMELIRMIKRGINDRNFWRGENGRRTRIAYERMCNILKGKFQTAAQRAMMDQVRESRNPGNAEIEDLIFLARSALILRGSVAHKSCLPACVYGLAVASGYDFEREGYSLVGIDPFRLLQNSQVFSLIRPNENPAHKSQLVWMACHSAAFEDLRVSSFIRGTRVVPRGQLSTRGVQIASNENMEAMDSNTLELRSRYWAIRTRSGGNTNQQRASAGQISVQPTFSVQRNLPFERATIMAAFTGNTEGRTSDMRTEIIRMMESARPEDVSFQGRGVFELSDEKATNPIVPSFDMNNEGSYFFGDNAEEYDN</sequence>
<organismHost>
    <name type="scientific">Aves</name>
    <dbReference type="NCBI Taxonomy" id="8782"/>
</organismHost>
<organismHost>
    <name type="scientific">Felis catus</name>
    <name type="common">Cat</name>
    <name type="synonym">Felis silvestris catus</name>
    <dbReference type="NCBI Taxonomy" id="9685"/>
</organismHost>
<organismHost>
    <name type="scientific">Homo sapiens</name>
    <name type="common">Human</name>
    <dbReference type="NCBI Taxonomy" id="9606"/>
</organismHost>
<organismHost>
    <name type="scientific">Panthera pardus</name>
    <name type="common">Leopard</name>
    <name type="synonym">Felis pardus</name>
    <dbReference type="NCBI Taxonomy" id="9691"/>
</organismHost>
<organismHost>
    <name type="scientific">Panthera tigris</name>
    <name type="common">Tiger</name>
    <dbReference type="NCBI Taxonomy" id="9694"/>
</organismHost>
<organismHost>
    <name type="scientific">Sus scrofa</name>
    <name type="common">Pig</name>
    <dbReference type="NCBI Taxonomy" id="9823"/>
</organismHost>
<feature type="chain" id="PRO_0000310920" description="Nucleoprotein">
    <location>
        <begin position="1"/>
        <end position="498"/>
    </location>
</feature>
<feature type="region of interest" description="Disordered" evidence="2">
    <location>
        <begin position="1"/>
        <end position="21"/>
    </location>
</feature>
<feature type="short sequence motif" description="Unconventional nuclear localization signal" evidence="1">
    <location>
        <begin position="1"/>
        <end position="18"/>
    </location>
</feature>
<feature type="short sequence motif" description="Bipartite nuclear localization signal" evidence="1">
    <location>
        <begin position="198"/>
        <end position="216"/>
    </location>
</feature>
<protein>
    <recommendedName>
        <fullName evidence="1">Nucleoprotein</fullName>
    </recommendedName>
    <alternativeName>
        <fullName evidence="1">Nucleocapsid protein</fullName>
        <shortName evidence="1">Protein N</shortName>
    </alternativeName>
</protein>
<dbReference type="EMBL" id="AY651511">
    <property type="protein sequence ID" value="AAT70642.1"/>
    <property type="molecule type" value="Genomic_RNA"/>
</dbReference>
<dbReference type="SMR" id="Q6DPE8"/>
<dbReference type="GO" id="GO:0019029">
    <property type="term" value="C:helical viral capsid"/>
    <property type="evidence" value="ECO:0007669"/>
    <property type="project" value="UniProtKB-UniRule"/>
</dbReference>
<dbReference type="GO" id="GO:0043657">
    <property type="term" value="C:host cell"/>
    <property type="evidence" value="ECO:0007669"/>
    <property type="project" value="GOC"/>
</dbReference>
<dbReference type="GO" id="GO:0042025">
    <property type="term" value="C:host cell nucleus"/>
    <property type="evidence" value="ECO:0007669"/>
    <property type="project" value="UniProtKB-SubCell"/>
</dbReference>
<dbReference type="GO" id="GO:1990904">
    <property type="term" value="C:ribonucleoprotein complex"/>
    <property type="evidence" value="ECO:0007669"/>
    <property type="project" value="UniProtKB-KW"/>
</dbReference>
<dbReference type="GO" id="GO:0019013">
    <property type="term" value="C:viral nucleocapsid"/>
    <property type="evidence" value="ECO:0007669"/>
    <property type="project" value="UniProtKB-UniRule"/>
</dbReference>
<dbReference type="GO" id="GO:0003723">
    <property type="term" value="F:RNA binding"/>
    <property type="evidence" value="ECO:0007669"/>
    <property type="project" value="UniProtKB-UniRule"/>
</dbReference>
<dbReference type="GO" id="GO:0005198">
    <property type="term" value="F:structural molecule activity"/>
    <property type="evidence" value="ECO:0007669"/>
    <property type="project" value="UniProtKB-UniRule"/>
</dbReference>
<dbReference type="GO" id="GO:0046718">
    <property type="term" value="P:symbiont entry into host cell"/>
    <property type="evidence" value="ECO:0007669"/>
    <property type="project" value="UniProtKB-KW"/>
</dbReference>
<dbReference type="GO" id="GO:0075732">
    <property type="term" value="P:viral penetration into host nucleus"/>
    <property type="evidence" value="ECO:0007669"/>
    <property type="project" value="UniProtKB-UniRule"/>
</dbReference>
<dbReference type="HAMAP" id="MF_04070">
    <property type="entry name" value="INFV_NCAP"/>
    <property type="match status" value="1"/>
</dbReference>
<dbReference type="InterPro" id="IPR002141">
    <property type="entry name" value="Flu_NP"/>
</dbReference>
<dbReference type="Pfam" id="PF00506">
    <property type="entry name" value="Flu_NP"/>
    <property type="match status" value="1"/>
</dbReference>
<dbReference type="SUPFAM" id="SSF161003">
    <property type="entry name" value="flu NP-like"/>
    <property type="match status" value="1"/>
</dbReference>
<accession>Q6DPE8</accession>
<name>NCAP_I02A2</name>
<proteinExistence type="inferred from homology"/>
<reference key="1">
    <citation type="journal article" date="2004" name="Nature">
        <title>Genesis of a highly pathogenic and potentially pandemic H5N1 influenza virus in eastern Asia.</title>
        <authorList>
            <person name="Li K.S."/>
            <person name="Guan Y."/>
            <person name="Wang J."/>
            <person name="Smith G.J.D."/>
            <person name="Xu K.M."/>
            <person name="Duan L."/>
            <person name="Rahardjo A.P."/>
            <person name="Puthavathana P."/>
            <person name="Buranathai C."/>
            <person name="Nguyen T.D."/>
            <person name="Estoepangestie A.T.S."/>
            <person name="Chaisingh A."/>
            <person name="Auewarakul P."/>
            <person name="Long H.T."/>
            <person name="Hanh N.T.H."/>
            <person name="Webby R.J."/>
            <person name="Poon L.L.M."/>
            <person name="Chen H."/>
            <person name="Shortridge K.F."/>
            <person name="Yuen K.Y."/>
            <person name="Webster R.G."/>
            <person name="Peiris J.S.M."/>
        </authorList>
    </citation>
    <scope>NUCLEOTIDE SEQUENCE [GENOMIC RNA]</scope>
</reference>